<dbReference type="EMBL" id="AM039952">
    <property type="protein sequence ID" value="CAJ22154.1"/>
    <property type="molecule type" value="Genomic_DNA"/>
</dbReference>
<dbReference type="RefSeq" id="WP_003483082.1">
    <property type="nucleotide sequence ID" value="NZ_CP017190.1"/>
</dbReference>
<dbReference type="SMR" id="Q3BYA9"/>
<dbReference type="STRING" id="456327.BJD11_20260"/>
<dbReference type="GeneID" id="97508876"/>
<dbReference type="KEGG" id="xcv:XCV0523"/>
<dbReference type="eggNOG" id="COG0102">
    <property type="taxonomic scope" value="Bacteria"/>
</dbReference>
<dbReference type="HOGENOM" id="CLU_082184_2_2_6"/>
<dbReference type="Proteomes" id="UP000007069">
    <property type="component" value="Chromosome"/>
</dbReference>
<dbReference type="GO" id="GO:0022625">
    <property type="term" value="C:cytosolic large ribosomal subunit"/>
    <property type="evidence" value="ECO:0007669"/>
    <property type="project" value="TreeGrafter"/>
</dbReference>
<dbReference type="GO" id="GO:0003729">
    <property type="term" value="F:mRNA binding"/>
    <property type="evidence" value="ECO:0007669"/>
    <property type="project" value="TreeGrafter"/>
</dbReference>
<dbReference type="GO" id="GO:0003735">
    <property type="term" value="F:structural constituent of ribosome"/>
    <property type="evidence" value="ECO:0007669"/>
    <property type="project" value="InterPro"/>
</dbReference>
<dbReference type="GO" id="GO:0017148">
    <property type="term" value="P:negative regulation of translation"/>
    <property type="evidence" value="ECO:0007669"/>
    <property type="project" value="TreeGrafter"/>
</dbReference>
<dbReference type="GO" id="GO:0006412">
    <property type="term" value="P:translation"/>
    <property type="evidence" value="ECO:0007669"/>
    <property type="project" value="UniProtKB-UniRule"/>
</dbReference>
<dbReference type="CDD" id="cd00392">
    <property type="entry name" value="Ribosomal_L13"/>
    <property type="match status" value="1"/>
</dbReference>
<dbReference type="FunFam" id="3.90.1180.10:FF:000001">
    <property type="entry name" value="50S ribosomal protein L13"/>
    <property type="match status" value="1"/>
</dbReference>
<dbReference type="Gene3D" id="3.90.1180.10">
    <property type="entry name" value="Ribosomal protein L13"/>
    <property type="match status" value="1"/>
</dbReference>
<dbReference type="HAMAP" id="MF_01366">
    <property type="entry name" value="Ribosomal_uL13"/>
    <property type="match status" value="1"/>
</dbReference>
<dbReference type="InterPro" id="IPR005822">
    <property type="entry name" value="Ribosomal_uL13"/>
</dbReference>
<dbReference type="InterPro" id="IPR005823">
    <property type="entry name" value="Ribosomal_uL13_bac-type"/>
</dbReference>
<dbReference type="InterPro" id="IPR023563">
    <property type="entry name" value="Ribosomal_uL13_CS"/>
</dbReference>
<dbReference type="InterPro" id="IPR036899">
    <property type="entry name" value="Ribosomal_uL13_sf"/>
</dbReference>
<dbReference type="NCBIfam" id="TIGR01066">
    <property type="entry name" value="rplM_bact"/>
    <property type="match status" value="1"/>
</dbReference>
<dbReference type="PANTHER" id="PTHR11545:SF2">
    <property type="entry name" value="LARGE RIBOSOMAL SUBUNIT PROTEIN UL13M"/>
    <property type="match status" value="1"/>
</dbReference>
<dbReference type="PANTHER" id="PTHR11545">
    <property type="entry name" value="RIBOSOMAL PROTEIN L13"/>
    <property type="match status" value="1"/>
</dbReference>
<dbReference type="Pfam" id="PF00572">
    <property type="entry name" value="Ribosomal_L13"/>
    <property type="match status" value="1"/>
</dbReference>
<dbReference type="PIRSF" id="PIRSF002181">
    <property type="entry name" value="Ribosomal_L13"/>
    <property type="match status" value="1"/>
</dbReference>
<dbReference type="SUPFAM" id="SSF52161">
    <property type="entry name" value="Ribosomal protein L13"/>
    <property type="match status" value="1"/>
</dbReference>
<dbReference type="PROSITE" id="PS00783">
    <property type="entry name" value="RIBOSOMAL_L13"/>
    <property type="match status" value="1"/>
</dbReference>
<proteinExistence type="inferred from homology"/>
<keyword id="KW-0687">Ribonucleoprotein</keyword>
<keyword id="KW-0689">Ribosomal protein</keyword>
<reference key="1">
    <citation type="journal article" date="2005" name="J. Bacteriol.">
        <title>Insights into genome plasticity and pathogenicity of the plant pathogenic Bacterium Xanthomonas campestris pv. vesicatoria revealed by the complete genome sequence.</title>
        <authorList>
            <person name="Thieme F."/>
            <person name="Koebnik R."/>
            <person name="Bekel T."/>
            <person name="Berger C."/>
            <person name="Boch J."/>
            <person name="Buettner D."/>
            <person name="Caldana C."/>
            <person name="Gaigalat L."/>
            <person name="Goesmann A."/>
            <person name="Kay S."/>
            <person name="Kirchner O."/>
            <person name="Lanz C."/>
            <person name="Linke B."/>
            <person name="McHardy A.C."/>
            <person name="Meyer F."/>
            <person name="Mittenhuber G."/>
            <person name="Nies D.H."/>
            <person name="Niesbach-Kloesgen U."/>
            <person name="Patschkowski T."/>
            <person name="Rueckert C."/>
            <person name="Rupp O."/>
            <person name="Schneiker S."/>
            <person name="Schuster S.C."/>
            <person name="Vorhoelter F.J."/>
            <person name="Weber E."/>
            <person name="Puehler A."/>
            <person name="Bonas U."/>
            <person name="Bartels D."/>
            <person name="Kaiser O."/>
        </authorList>
    </citation>
    <scope>NUCLEOTIDE SEQUENCE [LARGE SCALE GENOMIC DNA]</scope>
    <source>
        <strain>85-10</strain>
    </source>
</reference>
<accession>Q3BYA9</accession>
<organism>
    <name type="scientific">Xanthomonas euvesicatoria pv. vesicatoria (strain 85-10)</name>
    <name type="common">Xanthomonas campestris pv. vesicatoria</name>
    <dbReference type="NCBI Taxonomy" id="316273"/>
    <lineage>
        <taxon>Bacteria</taxon>
        <taxon>Pseudomonadati</taxon>
        <taxon>Pseudomonadota</taxon>
        <taxon>Gammaproteobacteria</taxon>
        <taxon>Lysobacterales</taxon>
        <taxon>Lysobacteraceae</taxon>
        <taxon>Xanthomonas</taxon>
    </lineage>
</organism>
<name>RL13_XANE5</name>
<gene>
    <name evidence="1" type="primary">rplM</name>
    <name type="ordered locus">XCV0523</name>
</gene>
<comment type="function">
    <text evidence="1">This protein is one of the early assembly proteins of the 50S ribosomal subunit, although it is not seen to bind rRNA by itself. It is important during the early stages of 50S assembly.</text>
</comment>
<comment type="subunit">
    <text evidence="1">Part of the 50S ribosomal subunit.</text>
</comment>
<comment type="similarity">
    <text evidence="1">Belongs to the universal ribosomal protein uL13 family.</text>
</comment>
<protein>
    <recommendedName>
        <fullName evidence="1">Large ribosomal subunit protein uL13</fullName>
    </recommendedName>
    <alternativeName>
        <fullName evidence="2">50S ribosomal protein L13</fullName>
    </alternativeName>
</protein>
<evidence type="ECO:0000255" key="1">
    <source>
        <dbReference type="HAMAP-Rule" id="MF_01366"/>
    </source>
</evidence>
<evidence type="ECO:0000305" key="2"/>
<sequence>MTTFTAKSETVQRDWYLVDAAGKTLGRLSTELARRLRGKHKPVYTPHVDTGDYLVVINAEKIVVTGNKLKDKKYHRFTGYIGNLKTESLEQALQRHPERVIEIAVKGMLPKGPLGRTMYRKLKVYSGAEHPHAAQQPQVLDI</sequence>
<feature type="chain" id="PRO_0000261829" description="Large ribosomal subunit protein uL13">
    <location>
        <begin position="1"/>
        <end position="142"/>
    </location>
</feature>